<keyword id="KW-0963">Cytoplasm</keyword>
<keyword id="KW-0210">Decarboxylase</keyword>
<keyword id="KW-0456">Lyase</keyword>
<keyword id="KW-0627">Porphyrin biosynthesis</keyword>
<keyword id="KW-1185">Reference proteome</keyword>
<proteinExistence type="inferred from homology"/>
<gene>
    <name evidence="1" type="primary">hemE</name>
    <name type="ordered locus">Francci3_1334</name>
</gene>
<protein>
    <recommendedName>
        <fullName evidence="1">Uroporphyrinogen decarboxylase</fullName>
        <shortName evidence="1">UPD</shortName>
        <shortName evidence="1">URO-D</shortName>
        <ecNumber evidence="1">4.1.1.37</ecNumber>
    </recommendedName>
</protein>
<evidence type="ECO:0000255" key="1">
    <source>
        <dbReference type="HAMAP-Rule" id="MF_00218"/>
    </source>
</evidence>
<evidence type="ECO:0000256" key="2">
    <source>
        <dbReference type="SAM" id="MobiDB-lite"/>
    </source>
</evidence>
<feature type="chain" id="PRO_0000325646" description="Uroporphyrinogen decarboxylase">
    <location>
        <begin position="1"/>
        <end position="369"/>
    </location>
</feature>
<feature type="region of interest" description="Disordered" evidence="2">
    <location>
        <begin position="1"/>
        <end position="26"/>
    </location>
</feature>
<feature type="binding site" evidence="1">
    <location>
        <begin position="56"/>
        <end position="60"/>
    </location>
    <ligand>
        <name>substrate</name>
    </ligand>
</feature>
<feature type="binding site" evidence="1">
    <location>
        <position position="105"/>
    </location>
    <ligand>
        <name>substrate</name>
    </ligand>
</feature>
<feature type="binding site" evidence="1">
    <location>
        <position position="180"/>
    </location>
    <ligand>
        <name>substrate</name>
    </ligand>
</feature>
<feature type="binding site" evidence="1">
    <location>
        <position position="235"/>
    </location>
    <ligand>
        <name>substrate</name>
    </ligand>
</feature>
<feature type="binding site" evidence="1">
    <location>
        <position position="348"/>
    </location>
    <ligand>
        <name>substrate</name>
    </ligand>
</feature>
<feature type="site" description="Transition state stabilizer" evidence="1">
    <location>
        <position position="105"/>
    </location>
</feature>
<organism>
    <name type="scientific">Frankia casuarinae (strain DSM 45818 / CECT 9043 / HFP020203 / CcI3)</name>
    <dbReference type="NCBI Taxonomy" id="106370"/>
    <lineage>
        <taxon>Bacteria</taxon>
        <taxon>Bacillati</taxon>
        <taxon>Actinomycetota</taxon>
        <taxon>Actinomycetes</taxon>
        <taxon>Frankiales</taxon>
        <taxon>Frankiaceae</taxon>
        <taxon>Frankia</taxon>
    </lineage>
</organism>
<name>DCUP_FRACC</name>
<reference key="1">
    <citation type="journal article" date="2007" name="Genome Res.">
        <title>Genome characteristics of facultatively symbiotic Frankia sp. strains reflect host range and host plant biogeography.</title>
        <authorList>
            <person name="Normand P."/>
            <person name="Lapierre P."/>
            <person name="Tisa L.S."/>
            <person name="Gogarten J.P."/>
            <person name="Alloisio N."/>
            <person name="Bagnarol E."/>
            <person name="Bassi C.A."/>
            <person name="Berry A.M."/>
            <person name="Bickhart D.M."/>
            <person name="Choisne N."/>
            <person name="Couloux A."/>
            <person name="Cournoyer B."/>
            <person name="Cruveiller S."/>
            <person name="Daubin V."/>
            <person name="Demange N."/>
            <person name="Francino M.P."/>
            <person name="Goltsman E."/>
            <person name="Huang Y."/>
            <person name="Kopp O.R."/>
            <person name="Labarre L."/>
            <person name="Lapidus A."/>
            <person name="Lavire C."/>
            <person name="Marechal J."/>
            <person name="Martinez M."/>
            <person name="Mastronunzio J.E."/>
            <person name="Mullin B.C."/>
            <person name="Niemann J."/>
            <person name="Pujic P."/>
            <person name="Rawnsley T."/>
            <person name="Rouy Z."/>
            <person name="Schenowitz C."/>
            <person name="Sellstedt A."/>
            <person name="Tavares F."/>
            <person name="Tomkins J.P."/>
            <person name="Vallenet D."/>
            <person name="Valverde C."/>
            <person name="Wall L.G."/>
            <person name="Wang Y."/>
            <person name="Medigue C."/>
            <person name="Benson D.R."/>
        </authorList>
    </citation>
    <scope>NUCLEOTIDE SEQUENCE [LARGE SCALE GENOMIC DNA]</scope>
    <source>
        <strain>DSM 45818 / CECT 9043 / HFP020203 / CcI3</strain>
    </source>
</reference>
<dbReference type="EC" id="4.1.1.37" evidence="1"/>
<dbReference type="EMBL" id="CP000249">
    <property type="protein sequence ID" value="ABD10711.1"/>
    <property type="molecule type" value="Genomic_DNA"/>
</dbReference>
<dbReference type="RefSeq" id="WP_011435777.1">
    <property type="nucleotide sequence ID" value="NZ_JENI01000007.1"/>
</dbReference>
<dbReference type="SMR" id="Q2JDD1"/>
<dbReference type="STRING" id="106370.Francci3_1334"/>
<dbReference type="KEGG" id="fra:Francci3_1334"/>
<dbReference type="eggNOG" id="COG0407">
    <property type="taxonomic scope" value="Bacteria"/>
</dbReference>
<dbReference type="HOGENOM" id="CLU_040933_0_1_11"/>
<dbReference type="OrthoDB" id="9806656at2"/>
<dbReference type="PhylomeDB" id="Q2JDD1"/>
<dbReference type="UniPathway" id="UPA00251">
    <property type="reaction ID" value="UER00321"/>
</dbReference>
<dbReference type="Proteomes" id="UP000001937">
    <property type="component" value="Chromosome"/>
</dbReference>
<dbReference type="GO" id="GO:0005829">
    <property type="term" value="C:cytosol"/>
    <property type="evidence" value="ECO:0007669"/>
    <property type="project" value="TreeGrafter"/>
</dbReference>
<dbReference type="GO" id="GO:0004853">
    <property type="term" value="F:uroporphyrinogen decarboxylase activity"/>
    <property type="evidence" value="ECO:0007669"/>
    <property type="project" value="UniProtKB-UniRule"/>
</dbReference>
<dbReference type="GO" id="GO:0006782">
    <property type="term" value="P:protoporphyrinogen IX biosynthetic process"/>
    <property type="evidence" value="ECO:0007669"/>
    <property type="project" value="UniProtKB-UniRule"/>
</dbReference>
<dbReference type="CDD" id="cd00717">
    <property type="entry name" value="URO-D"/>
    <property type="match status" value="1"/>
</dbReference>
<dbReference type="Gene3D" id="3.20.20.210">
    <property type="match status" value="1"/>
</dbReference>
<dbReference type="HAMAP" id="MF_00218">
    <property type="entry name" value="URO_D"/>
    <property type="match status" value="1"/>
</dbReference>
<dbReference type="InterPro" id="IPR038071">
    <property type="entry name" value="UROD/MetE-like_sf"/>
</dbReference>
<dbReference type="InterPro" id="IPR006361">
    <property type="entry name" value="Uroporphyrinogen_deCO2ase_HemE"/>
</dbReference>
<dbReference type="InterPro" id="IPR000257">
    <property type="entry name" value="Uroporphyrinogen_deCOase"/>
</dbReference>
<dbReference type="NCBIfam" id="TIGR01464">
    <property type="entry name" value="hemE"/>
    <property type="match status" value="1"/>
</dbReference>
<dbReference type="PANTHER" id="PTHR21091">
    <property type="entry name" value="METHYLTETRAHYDROFOLATE:HOMOCYSTEINE METHYLTRANSFERASE RELATED"/>
    <property type="match status" value="1"/>
</dbReference>
<dbReference type="PANTHER" id="PTHR21091:SF169">
    <property type="entry name" value="UROPORPHYRINOGEN DECARBOXYLASE"/>
    <property type="match status" value="1"/>
</dbReference>
<dbReference type="Pfam" id="PF01208">
    <property type="entry name" value="URO-D"/>
    <property type="match status" value="1"/>
</dbReference>
<dbReference type="SUPFAM" id="SSF51726">
    <property type="entry name" value="UROD/MetE-like"/>
    <property type="match status" value="1"/>
</dbReference>
<dbReference type="PROSITE" id="PS00906">
    <property type="entry name" value="UROD_1"/>
    <property type="match status" value="1"/>
</dbReference>
<dbReference type="PROSITE" id="PS00907">
    <property type="entry name" value="UROD_2"/>
    <property type="match status" value="1"/>
</dbReference>
<accession>Q2JDD1</accession>
<comment type="function">
    <text evidence="1">Catalyzes the decarboxylation of four acetate groups of uroporphyrinogen-III to yield coproporphyrinogen-III.</text>
</comment>
<comment type="catalytic activity">
    <reaction evidence="1">
        <text>uroporphyrinogen III + 4 H(+) = coproporphyrinogen III + 4 CO2</text>
        <dbReference type="Rhea" id="RHEA:19865"/>
        <dbReference type="ChEBI" id="CHEBI:15378"/>
        <dbReference type="ChEBI" id="CHEBI:16526"/>
        <dbReference type="ChEBI" id="CHEBI:57308"/>
        <dbReference type="ChEBI" id="CHEBI:57309"/>
        <dbReference type="EC" id="4.1.1.37"/>
    </reaction>
</comment>
<comment type="pathway">
    <text evidence="1">Porphyrin-containing compound metabolism; protoporphyrin-IX biosynthesis; coproporphyrinogen-III from 5-aminolevulinate: step 4/4.</text>
</comment>
<comment type="subunit">
    <text evidence="1">Homodimer.</text>
</comment>
<comment type="subcellular location">
    <subcellularLocation>
        <location evidence="1">Cytoplasm</location>
    </subcellularLocation>
</comment>
<comment type="similarity">
    <text evidence="1">Belongs to the uroporphyrinogen decarboxylase family.</text>
</comment>
<sequence length="369" mass="38943">MPVLHVDARPGSGPGGVSPPPSGAALARRPGLADTAPFLRACRREHPGTTPVWFMRQAGRVLPEYRALRAGVAMLDSCRDAEMITEITLQPVRRFRPDAAIFFSDIVVPLVAIGLDIDIVAGIGPVVAEPVRDAVGLAALRALEPDDVPYVADAVRFLLAELGSTPLIGFAGAPFTLASYLIEGGPSRDHARTKALMYSEPKLWHALLARLADITTAFLRVQVDAGVDALQLFDSWAGALDEADYRRYVAPHSARVLAAFAGEVPRIHFGVNTGELLAAMGQAGADVVGVDWRVPLDEAARRIGPGHAVQGNLDPTAVFAPEPVLAAKVRDVCARGAEAEGHVFNLGHGVLPQTDPGVLAHVADLVHGG</sequence>